<gene>
    <name evidence="1" type="primary">guaB</name>
    <name type="ordered locus">BQ2027_MB3445C</name>
</gene>
<evidence type="ECO:0000255" key="1">
    <source>
        <dbReference type="HAMAP-Rule" id="MF_01964"/>
    </source>
</evidence>
<keyword id="KW-0129">CBS domain</keyword>
<keyword id="KW-0332">GMP biosynthesis</keyword>
<keyword id="KW-0479">Metal-binding</keyword>
<keyword id="KW-0520">NAD</keyword>
<keyword id="KW-0560">Oxidoreductase</keyword>
<keyword id="KW-0630">Potassium</keyword>
<keyword id="KW-0658">Purine biosynthesis</keyword>
<keyword id="KW-1185">Reference proteome</keyword>
<keyword id="KW-0677">Repeat</keyword>
<reference key="1">
    <citation type="journal article" date="2003" name="Proc. Natl. Acad. Sci. U.S.A.">
        <title>The complete genome sequence of Mycobacterium bovis.</title>
        <authorList>
            <person name="Garnier T."/>
            <person name="Eiglmeier K."/>
            <person name="Camus J.-C."/>
            <person name="Medina N."/>
            <person name="Mansoor H."/>
            <person name="Pryor M."/>
            <person name="Duthoy S."/>
            <person name="Grondin S."/>
            <person name="Lacroix C."/>
            <person name="Monsempe C."/>
            <person name="Simon S."/>
            <person name="Harris B."/>
            <person name="Atkin R."/>
            <person name="Doggett J."/>
            <person name="Mayes R."/>
            <person name="Keating L."/>
            <person name="Wheeler P.R."/>
            <person name="Parkhill J."/>
            <person name="Barrell B.G."/>
            <person name="Cole S.T."/>
            <person name="Gordon S.V."/>
            <person name="Hewinson R.G."/>
        </authorList>
    </citation>
    <scope>NUCLEOTIDE SEQUENCE [LARGE SCALE GENOMIC DNA]</scope>
    <source>
        <strain>ATCC BAA-935 / AF2122/97</strain>
    </source>
</reference>
<reference key="2">
    <citation type="journal article" date="2017" name="Genome Announc.">
        <title>Updated reference genome sequence and annotation of Mycobacterium bovis AF2122/97.</title>
        <authorList>
            <person name="Malone K.M."/>
            <person name="Farrell D."/>
            <person name="Stuber T.P."/>
            <person name="Schubert O.T."/>
            <person name="Aebersold R."/>
            <person name="Robbe-Austerman S."/>
            <person name="Gordon S.V."/>
        </authorList>
    </citation>
    <scope>NUCLEOTIDE SEQUENCE [LARGE SCALE GENOMIC DNA]</scope>
    <scope>GENOME REANNOTATION</scope>
    <source>
        <strain>ATCC BAA-935 / AF2122/97</strain>
    </source>
</reference>
<protein>
    <recommendedName>
        <fullName evidence="1">Inosine-5'-monophosphate dehydrogenase</fullName>
        <shortName evidence="1">IMP dehydrogenase</shortName>
        <shortName evidence="1">IMPD</shortName>
        <shortName evidence="1">IMPDH</shortName>
        <ecNumber evidence="1">1.1.1.205</ecNumber>
    </recommendedName>
</protein>
<organism>
    <name type="scientific">Mycobacterium bovis (strain ATCC BAA-935 / AF2122/97)</name>
    <dbReference type="NCBI Taxonomy" id="233413"/>
    <lineage>
        <taxon>Bacteria</taxon>
        <taxon>Bacillati</taxon>
        <taxon>Actinomycetota</taxon>
        <taxon>Actinomycetes</taxon>
        <taxon>Mycobacteriales</taxon>
        <taxon>Mycobacteriaceae</taxon>
        <taxon>Mycobacterium</taxon>
        <taxon>Mycobacterium tuberculosis complex</taxon>
    </lineage>
</organism>
<proteinExistence type="inferred from homology"/>
<sequence length="529" mass="54867">MSRGMSGLEDSSDLVVSPYVRMGGLTTDPVPTGGDDPHKVAMLGLTFDDVLLLPAASDVVPATADTSSQLTKKIRLKVPLVSSAMDTVTESRMAIAMARAGGMGVLHRNLPVAEQAGQVEMVKRSEAGMVTDPVTCRPDNTLAQVDALCARFRISGLPVVDDDGALVGIITNRDMRFEVDQSKQVAEVMTKAPLITAQEGVSASAALGLLRRNKIEKLPVVDGRGRLTGLITVKDFVKTEQHPLATKDSDGRLLVGAAVGVGGDAWVRAMMLVDAGVDVLVVDTAHAHNRLVLDMVGKLKSEVGDRVEVVGGNVATRSAAAALVDAGADAVKVGVGPGSICTTRVVAGVGAPQITAILEAVAACRPAGVPVIADGGLQYSGDIAKALAAGASTAMLGSLLAGTAEAPGELIFVNGKQYKSYRGMGSLGAMRGRGGATSYSKDRYFADDALSEDKLVPEGIEGRVPFRGPLSSVIHQLTGGLRAAMGYTGSPTIEVLQQAQFVRITPAGLKESHPHDVAMTVEAPNYYAR</sequence>
<comment type="function">
    <text evidence="1">Catalyzes the conversion of inosine 5'-phosphate (IMP) to xanthosine 5'-phosphate (XMP), the first committed and rate-limiting step in the de novo synthesis of guanine nucleotides, and therefore plays an important role in the regulation of cell growth.</text>
</comment>
<comment type="catalytic activity">
    <reaction evidence="1">
        <text>IMP + NAD(+) + H2O = XMP + NADH + H(+)</text>
        <dbReference type="Rhea" id="RHEA:11708"/>
        <dbReference type="ChEBI" id="CHEBI:15377"/>
        <dbReference type="ChEBI" id="CHEBI:15378"/>
        <dbReference type="ChEBI" id="CHEBI:57464"/>
        <dbReference type="ChEBI" id="CHEBI:57540"/>
        <dbReference type="ChEBI" id="CHEBI:57945"/>
        <dbReference type="ChEBI" id="CHEBI:58053"/>
        <dbReference type="EC" id="1.1.1.205"/>
    </reaction>
</comment>
<comment type="cofactor">
    <cofactor evidence="1">
        <name>K(+)</name>
        <dbReference type="ChEBI" id="CHEBI:29103"/>
    </cofactor>
</comment>
<comment type="activity regulation">
    <text evidence="1">Mycophenolic acid (MPA) is a non-competitive inhibitor that prevents formation of the closed enzyme conformation by binding to the same site as the amobile flap. In contrast, mizoribine monophosphate (MZP) is a competitive inhibitor that induces the closed conformation. MPA is a potent inhibitor of mammalian IMPDHs but a poor inhibitor of the bacterial enzymes. MZP is a more potent inhibitor of bacterial IMPDH.</text>
</comment>
<comment type="pathway">
    <text evidence="1">Purine metabolism; XMP biosynthesis via de novo pathway; XMP from IMP: step 1/1.</text>
</comment>
<comment type="subunit">
    <text evidence="1">Homotetramer.</text>
</comment>
<comment type="similarity">
    <text evidence="1">Belongs to the IMPDH/GMPR family.</text>
</comment>
<dbReference type="EC" id="1.1.1.205" evidence="1"/>
<dbReference type="EMBL" id="LT708304">
    <property type="protein sequence ID" value="SIU02073.1"/>
    <property type="molecule type" value="Genomic_DNA"/>
</dbReference>
<dbReference type="RefSeq" id="NP_857085.1">
    <property type="nucleotide sequence ID" value="NC_002945.3"/>
</dbReference>
<dbReference type="RefSeq" id="WP_003900682.1">
    <property type="nucleotide sequence ID" value="NC_002945.4"/>
</dbReference>
<dbReference type="SMR" id="P65168"/>
<dbReference type="GeneID" id="45427407"/>
<dbReference type="KEGG" id="mbo:BQ2027_MB3445C"/>
<dbReference type="PATRIC" id="fig|233413.5.peg.3780"/>
<dbReference type="UniPathway" id="UPA00601">
    <property type="reaction ID" value="UER00295"/>
</dbReference>
<dbReference type="Proteomes" id="UP000001419">
    <property type="component" value="Chromosome"/>
</dbReference>
<dbReference type="GO" id="GO:0003938">
    <property type="term" value="F:IMP dehydrogenase activity"/>
    <property type="evidence" value="ECO:0007669"/>
    <property type="project" value="UniProtKB-UniRule"/>
</dbReference>
<dbReference type="GO" id="GO:0046872">
    <property type="term" value="F:metal ion binding"/>
    <property type="evidence" value="ECO:0007669"/>
    <property type="project" value="UniProtKB-UniRule"/>
</dbReference>
<dbReference type="GO" id="GO:0000166">
    <property type="term" value="F:nucleotide binding"/>
    <property type="evidence" value="ECO:0007669"/>
    <property type="project" value="UniProtKB-UniRule"/>
</dbReference>
<dbReference type="GO" id="GO:0006177">
    <property type="term" value="P:GMP biosynthetic process"/>
    <property type="evidence" value="ECO:0007669"/>
    <property type="project" value="UniProtKB-UniRule"/>
</dbReference>
<dbReference type="GO" id="GO:0006183">
    <property type="term" value="P:GTP biosynthetic process"/>
    <property type="evidence" value="ECO:0007669"/>
    <property type="project" value="TreeGrafter"/>
</dbReference>
<dbReference type="CDD" id="cd04601">
    <property type="entry name" value="CBS_pair_IMPDH"/>
    <property type="match status" value="1"/>
</dbReference>
<dbReference type="CDD" id="cd00381">
    <property type="entry name" value="IMPDH"/>
    <property type="match status" value="1"/>
</dbReference>
<dbReference type="FunFam" id="3.20.20.70:FF:000003">
    <property type="entry name" value="GMP reductase"/>
    <property type="match status" value="1"/>
</dbReference>
<dbReference type="Gene3D" id="3.20.20.70">
    <property type="entry name" value="Aldolase class I"/>
    <property type="match status" value="1"/>
</dbReference>
<dbReference type="HAMAP" id="MF_01964">
    <property type="entry name" value="IMPDH"/>
    <property type="match status" value="1"/>
</dbReference>
<dbReference type="InterPro" id="IPR013785">
    <property type="entry name" value="Aldolase_TIM"/>
</dbReference>
<dbReference type="InterPro" id="IPR000644">
    <property type="entry name" value="CBS_dom"/>
</dbReference>
<dbReference type="InterPro" id="IPR046342">
    <property type="entry name" value="CBS_dom_sf"/>
</dbReference>
<dbReference type="InterPro" id="IPR005990">
    <property type="entry name" value="IMP_DH"/>
</dbReference>
<dbReference type="InterPro" id="IPR015875">
    <property type="entry name" value="IMP_DH/GMP_Rdtase_CS"/>
</dbReference>
<dbReference type="InterPro" id="IPR001093">
    <property type="entry name" value="IMP_DH_GMPRt"/>
</dbReference>
<dbReference type="NCBIfam" id="TIGR01302">
    <property type="entry name" value="IMP_dehydrog"/>
    <property type="match status" value="1"/>
</dbReference>
<dbReference type="PANTHER" id="PTHR11911:SF111">
    <property type="entry name" value="INOSINE-5'-MONOPHOSPHATE DEHYDROGENASE"/>
    <property type="match status" value="1"/>
</dbReference>
<dbReference type="PANTHER" id="PTHR11911">
    <property type="entry name" value="INOSINE-5-MONOPHOSPHATE DEHYDROGENASE RELATED"/>
    <property type="match status" value="1"/>
</dbReference>
<dbReference type="Pfam" id="PF00571">
    <property type="entry name" value="CBS"/>
    <property type="match status" value="2"/>
</dbReference>
<dbReference type="Pfam" id="PF00478">
    <property type="entry name" value="IMPDH"/>
    <property type="match status" value="1"/>
</dbReference>
<dbReference type="PIRSF" id="PIRSF000130">
    <property type="entry name" value="IMPDH"/>
    <property type="match status" value="1"/>
</dbReference>
<dbReference type="SMART" id="SM00116">
    <property type="entry name" value="CBS"/>
    <property type="match status" value="2"/>
</dbReference>
<dbReference type="SMART" id="SM01240">
    <property type="entry name" value="IMPDH"/>
    <property type="match status" value="1"/>
</dbReference>
<dbReference type="SUPFAM" id="SSF54631">
    <property type="entry name" value="CBS-domain pair"/>
    <property type="match status" value="1"/>
</dbReference>
<dbReference type="SUPFAM" id="SSF51412">
    <property type="entry name" value="Inosine monophosphate dehydrogenase (IMPDH)"/>
    <property type="match status" value="1"/>
</dbReference>
<dbReference type="PROSITE" id="PS51371">
    <property type="entry name" value="CBS"/>
    <property type="match status" value="2"/>
</dbReference>
<dbReference type="PROSITE" id="PS00487">
    <property type="entry name" value="IMP_DH_GMP_RED"/>
    <property type="match status" value="1"/>
</dbReference>
<name>IMDH_MYCBO</name>
<accession>P65168</accession>
<accession>A0A1R3Y452</accession>
<accession>Q50715</accession>
<accession>X2BPI0</accession>
<feature type="chain" id="PRO_0000093700" description="Inosine-5'-monophosphate dehydrogenase">
    <location>
        <begin position="1"/>
        <end position="529"/>
    </location>
</feature>
<feature type="domain" description="CBS 1" evidence="1">
    <location>
        <begin position="129"/>
        <end position="185"/>
    </location>
</feature>
<feature type="domain" description="CBS 2" evidence="1">
    <location>
        <begin position="189"/>
        <end position="246"/>
    </location>
</feature>
<feature type="active site" description="Thioimidate intermediate" evidence="1">
    <location>
        <position position="341"/>
    </location>
</feature>
<feature type="active site" description="Proton acceptor" evidence="1">
    <location>
        <position position="443"/>
    </location>
</feature>
<feature type="binding site" evidence="1">
    <location>
        <position position="283"/>
    </location>
    <ligand>
        <name>NAD(+)</name>
        <dbReference type="ChEBI" id="CHEBI:57540"/>
    </ligand>
</feature>
<feature type="binding site" evidence="1">
    <location>
        <begin position="334"/>
        <end position="336"/>
    </location>
    <ligand>
        <name>NAD(+)</name>
        <dbReference type="ChEBI" id="CHEBI:57540"/>
    </ligand>
</feature>
<feature type="binding site" description="in other chain" evidence="1">
    <location>
        <position position="336"/>
    </location>
    <ligand>
        <name>K(+)</name>
        <dbReference type="ChEBI" id="CHEBI:29103"/>
        <note>ligand shared between two tetrameric partners</note>
    </ligand>
</feature>
<feature type="binding site" description="in other chain" evidence="1">
    <location>
        <position position="338"/>
    </location>
    <ligand>
        <name>K(+)</name>
        <dbReference type="ChEBI" id="CHEBI:29103"/>
        <note>ligand shared between two tetrameric partners</note>
    </ligand>
</feature>
<feature type="binding site" evidence="1">
    <location>
        <position position="339"/>
    </location>
    <ligand>
        <name>IMP</name>
        <dbReference type="ChEBI" id="CHEBI:58053"/>
    </ligand>
</feature>
<feature type="binding site" description="in other chain" evidence="1">
    <location>
        <position position="341"/>
    </location>
    <ligand>
        <name>K(+)</name>
        <dbReference type="ChEBI" id="CHEBI:29103"/>
        <note>ligand shared between two tetrameric partners</note>
    </ligand>
</feature>
<feature type="binding site" evidence="1">
    <location>
        <begin position="374"/>
        <end position="376"/>
    </location>
    <ligand>
        <name>IMP</name>
        <dbReference type="ChEBI" id="CHEBI:58053"/>
    </ligand>
</feature>
<feature type="binding site" evidence="1">
    <location>
        <begin position="397"/>
        <end position="398"/>
    </location>
    <ligand>
        <name>IMP</name>
        <dbReference type="ChEBI" id="CHEBI:58053"/>
    </ligand>
</feature>
<feature type="binding site" evidence="1">
    <location>
        <begin position="421"/>
        <end position="425"/>
    </location>
    <ligand>
        <name>IMP</name>
        <dbReference type="ChEBI" id="CHEBI:58053"/>
    </ligand>
</feature>
<feature type="binding site" evidence="1">
    <location>
        <position position="458"/>
    </location>
    <ligand>
        <name>IMP</name>
        <dbReference type="ChEBI" id="CHEBI:58053"/>
    </ligand>
</feature>
<feature type="binding site" evidence="1">
    <location>
        <position position="511"/>
    </location>
    <ligand>
        <name>K(+)</name>
        <dbReference type="ChEBI" id="CHEBI:29103"/>
        <note>ligand shared between two tetrameric partners</note>
    </ligand>
</feature>
<feature type="binding site" evidence="1">
    <location>
        <position position="512"/>
    </location>
    <ligand>
        <name>K(+)</name>
        <dbReference type="ChEBI" id="CHEBI:29103"/>
        <note>ligand shared between two tetrameric partners</note>
    </ligand>
</feature>
<feature type="binding site" evidence="1">
    <location>
        <position position="513"/>
    </location>
    <ligand>
        <name>K(+)</name>
        <dbReference type="ChEBI" id="CHEBI:29103"/>
        <note>ligand shared between two tetrameric partners</note>
    </ligand>
</feature>